<sequence>MIPEKRIIRRIQSGGCAIHCQDCSISQLCIPFTLNEHELDQLDNIIERKKPIQKGQTLFKAGDELKSLYAIRSGTIKSYTITEQGDEQITGFHLAGDLVGFDAIGSGHHPSFAQALETSMVCEIPFETLDDLSGKMPNLRQQMMRLMSGEIKGDQDMILLLSKKNAEERLAAFIYNLSCRFAQRGFSPREFRLTMTRGDIGNYLGLTVETISRLLGRFQKSGMLAVKGKYITIENNDALAQLAGHTRNVA</sequence>
<proteinExistence type="inferred from homology"/>
<protein>
    <recommendedName>
        <fullName>Fumarate and nitrate reduction regulatory protein</fullName>
    </recommendedName>
</protein>
<reference key="1">
    <citation type="journal article" date="1999" name="Mol. Microbiol.">
        <title>Spontaneous tandem amplification and deletion of the Shiga toxin operon in Shigella dysenteriae 1.</title>
        <authorList>
            <person name="McDonough M.A."/>
            <person name="Butterton J.R."/>
        </authorList>
    </citation>
    <scope>NUCLEOTIDE SEQUENCE [GENOMIC DNA]</scope>
    <source>
        <strain>Type 1</strain>
    </source>
</reference>
<name>FNR_SHIDY</name>
<accession>Q9LA24</accession>
<organism>
    <name type="scientific">Shigella dysenteriae</name>
    <dbReference type="NCBI Taxonomy" id="622"/>
    <lineage>
        <taxon>Bacteria</taxon>
        <taxon>Pseudomonadati</taxon>
        <taxon>Pseudomonadota</taxon>
        <taxon>Gammaproteobacteria</taxon>
        <taxon>Enterobacterales</taxon>
        <taxon>Enterobacteriaceae</taxon>
        <taxon>Shigella</taxon>
    </lineage>
</organism>
<gene>
    <name type="primary">fnr</name>
</gene>
<keyword id="KW-0004">4Fe-4S</keyword>
<keyword id="KW-0010">Activator</keyword>
<keyword id="KW-0963">Cytoplasm</keyword>
<keyword id="KW-0238">DNA-binding</keyword>
<keyword id="KW-0408">Iron</keyword>
<keyword id="KW-0411">Iron-sulfur</keyword>
<keyword id="KW-0479">Metal-binding</keyword>
<keyword id="KW-0678">Repressor</keyword>
<keyword id="KW-0804">Transcription</keyword>
<keyword id="KW-0805">Transcription regulation</keyword>
<comment type="function">
    <text evidence="1">Global transcription factor that controls the expression of over 100 target genes in response to anoxia. It facilitates the adaptation to anaerobic growth conditions by regulating the expression of gene products that are involved in anaerobic energy metabolism. When the terminal electron acceptor, O(2), is no longer available, it represses the synthesis of enzymes involved in aerobic respiration and increases the synthesis of enzymes required for anaerobic respiration (By similarity).</text>
</comment>
<comment type="cofactor">
    <cofactor evidence="1">
        <name>[4Fe-4S] cluster</name>
        <dbReference type="ChEBI" id="CHEBI:49883"/>
    </cofactor>
    <text evidence="1">Binds 1 [4Fe-4S] cluster per subunit.</text>
</comment>
<comment type="subunit">
    <text evidence="1">Homodimer.</text>
</comment>
<comment type="subcellular location">
    <subcellularLocation>
        <location evidence="4">Cytoplasm</location>
    </subcellularLocation>
</comment>
<comment type="sequence caution" evidence="4">
    <conflict type="erroneous initiation">
        <sequence resource="EMBL-CDS" id="AAF28139"/>
    </conflict>
</comment>
<feature type="chain" id="PRO_0000100168" description="Fumarate and nitrate reduction regulatory protein">
    <location>
        <begin position="1"/>
        <end position="250"/>
    </location>
</feature>
<feature type="domain" description="HTH crp-type" evidence="3">
    <location>
        <begin position="164"/>
        <end position="237"/>
    </location>
</feature>
<feature type="DNA-binding region" description="H-T-H motif" evidence="3">
    <location>
        <begin position="197"/>
        <end position="216"/>
    </location>
</feature>
<feature type="region of interest" description="Essential for the oxygen-regulated activity" evidence="1">
    <location>
        <begin position="20"/>
        <end position="29"/>
    </location>
</feature>
<feature type="region of interest" description="Activating region 2A" evidence="2">
    <location>
        <begin position="47"/>
        <end position="50"/>
    </location>
</feature>
<feature type="region of interest" description="Activating region 3A" evidence="2">
    <location>
        <begin position="60"/>
        <end position="61"/>
    </location>
</feature>
<feature type="region of interest" description="Activating region 1A" evidence="2">
    <location>
        <begin position="71"/>
        <end position="75"/>
    </location>
</feature>
<feature type="region of interest" description="Activating region 3B" evidence="2">
    <location>
        <position position="81"/>
    </location>
</feature>
<feature type="region of interest" description="Activating region 3C" evidence="2">
    <location>
        <begin position="85"/>
        <end position="87"/>
    </location>
</feature>
<feature type="region of interest" description="Activating region 3D" evidence="2">
    <location>
        <position position="112"/>
    </location>
</feature>
<feature type="region of interest" description="Activating region 1B" evidence="2">
    <location>
        <begin position="116"/>
        <end position="121"/>
    </location>
</feature>
<feature type="region of interest" description="Activating region 2B" evidence="2">
    <location>
        <begin position="123"/>
        <end position="124"/>
    </location>
</feature>
<feature type="region of interest" description="Activating region 2C" evidence="2">
    <location>
        <begin position="127"/>
        <end position="128"/>
    </location>
</feature>
<feature type="region of interest" description="Dimerization" evidence="2">
    <location>
        <begin position="140"/>
        <end position="159"/>
    </location>
</feature>
<feature type="region of interest" description="Activating region 1C" evidence="2">
    <location>
        <begin position="181"/>
        <end position="191"/>
    </location>
</feature>
<feature type="binding site" evidence="2">
    <location>
        <position position="20"/>
    </location>
    <ligand>
        <name>[4Fe-4S] cluster</name>
        <dbReference type="ChEBI" id="CHEBI:49883"/>
    </ligand>
</feature>
<feature type="binding site" evidence="2">
    <location>
        <position position="23"/>
    </location>
    <ligand>
        <name>[4Fe-4S] cluster</name>
        <dbReference type="ChEBI" id="CHEBI:49883"/>
    </ligand>
</feature>
<feature type="binding site" evidence="2">
    <location>
        <position position="29"/>
    </location>
    <ligand>
        <name>[4Fe-4S] cluster</name>
        <dbReference type="ChEBI" id="CHEBI:49883"/>
    </ligand>
</feature>
<feature type="binding site" evidence="2">
    <location>
        <position position="122"/>
    </location>
    <ligand>
        <name>[4Fe-4S] cluster</name>
        <dbReference type="ChEBI" id="CHEBI:49883"/>
    </ligand>
</feature>
<dbReference type="EMBL" id="AF153317">
    <property type="protein sequence ID" value="AAF28139.1"/>
    <property type="status" value="ALT_INIT"/>
    <property type="molecule type" value="Genomic_DNA"/>
</dbReference>
<dbReference type="RefSeq" id="WP_000611904.1">
    <property type="nucleotide sequence ID" value="NZ_UAUQ01000013.1"/>
</dbReference>
<dbReference type="SMR" id="Q9LA24"/>
<dbReference type="OMA" id="SICRIHK"/>
<dbReference type="GO" id="GO:0005829">
    <property type="term" value="C:cytosol"/>
    <property type="evidence" value="ECO:0007669"/>
    <property type="project" value="TreeGrafter"/>
</dbReference>
<dbReference type="GO" id="GO:0051539">
    <property type="term" value="F:4 iron, 4 sulfur cluster binding"/>
    <property type="evidence" value="ECO:0007669"/>
    <property type="project" value="UniProtKB-KW"/>
</dbReference>
<dbReference type="GO" id="GO:0003677">
    <property type="term" value="F:DNA binding"/>
    <property type="evidence" value="ECO:0007669"/>
    <property type="project" value="UniProtKB-KW"/>
</dbReference>
<dbReference type="GO" id="GO:0003700">
    <property type="term" value="F:DNA-binding transcription factor activity"/>
    <property type="evidence" value="ECO:0007669"/>
    <property type="project" value="InterPro"/>
</dbReference>
<dbReference type="GO" id="GO:0046872">
    <property type="term" value="F:metal ion binding"/>
    <property type="evidence" value="ECO:0007669"/>
    <property type="project" value="UniProtKB-KW"/>
</dbReference>
<dbReference type="CDD" id="cd00038">
    <property type="entry name" value="CAP_ED"/>
    <property type="match status" value="1"/>
</dbReference>
<dbReference type="CDD" id="cd00092">
    <property type="entry name" value="HTH_CRP"/>
    <property type="match status" value="1"/>
</dbReference>
<dbReference type="FunFam" id="1.10.10.10:FF:000028">
    <property type="entry name" value="Fumarate/nitrate reduction transcriptional regulator Fnr"/>
    <property type="match status" value="1"/>
</dbReference>
<dbReference type="FunFam" id="2.60.120.10:FF:000004">
    <property type="entry name" value="Fumarate/nitrate reduction transcriptional regulator Fnr"/>
    <property type="match status" value="1"/>
</dbReference>
<dbReference type="Gene3D" id="2.60.120.10">
    <property type="entry name" value="Jelly Rolls"/>
    <property type="match status" value="1"/>
</dbReference>
<dbReference type="Gene3D" id="1.10.10.10">
    <property type="entry name" value="Winged helix-like DNA-binding domain superfamily/Winged helix DNA-binding domain"/>
    <property type="match status" value="1"/>
</dbReference>
<dbReference type="InterPro" id="IPR000595">
    <property type="entry name" value="cNMP-bd_dom"/>
</dbReference>
<dbReference type="InterPro" id="IPR018490">
    <property type="entry name" value="cNMP-bd_dom_sf"/>
</dbReference>
<dbReference type="InterPro" id="IPR050397">
    <property type="entry name" value="Env_Response_Regulators"/>
</dbReference>
<dbReference type="InterPro" id="IPR012318">
    <property type="entry name" value="HTH_CRP"/>
</dbReference>
<dbReference type="InterPro" id="IPR014710">
    <property type="entry name" value="RmlC-like_jellyroll"/>
</dbReference>
<dbReference type="InterPro" id="IPR018335">
    <property type="entry name" value="Tscrpt_reg_HTH_Crp-type_CS"/>
</dbReference>
<dbReference type="InterPro" id="IPR036388">
    <property type="entry name" value="WH-like_DNA-bd_sf"/>
</dbReference>
<dbReference type="InterPro" id="IPR036390">
    <property type="entry name" value="WH_DNA-bd_sf"/>
</dbReference>
<dbReference type="NCBIfam" id="NF008365">
    <property type="entry name" value="PRK11161.1"/>
    <property type="match status" value="1"/>
</dbReference>
<dbReference type="PANTHER" id="PTHR24567">
    <property type="entry name" value="CRP FAMILY TRANSCRIPTIONAL REGULATORY PROTEIN"/>
    <property type="match status" value="1"/>
</dbReference>
<dbReference type="PANTHER" id="PTHR24567:SF75">
    <property type="entry name" value="FUMARATE AND NITRATE REDUCTION REGULATORY PROTEIN"/>
    <property type="match status" value="1"/>
</dbReference>
<dbReference type="Pfam" id="PF00027">
    <property type="entry name" value="cNMP_binding"/>
    <property type="match status" value="1"/>
</dbReference>
<dbReference type="Pfam" id="PF13545">
    <property type="entry name" value="HTH_Crp_2"/>
    <property type="match status" value="1"/>
</dbReference>
<dbReference type="PRINTS" id="PR00034">
    <property type="entry name" value="HTHCRP"/>
</dbReference>
<dbReference type="SMART" id="SM00100">
    <property type="entry name" value="cNMP"/>
    <property type="match status" value="1"/>
</dbReference>
<dbReference type="SMART" id="SM00419">
    <property type="entry name" value="HTH_CRP"/>
    <property type="match status" value="1"/>
</dbReference>
<dbReference type="SUPFAM" id="SSF51206">
    <property type="entry name" value="cAMP-binding domain-like"/>
    <property type="match status" value="1"/>
</dbReference>
<dbReference type="SUPFAM" id="SSF46785">
    <property type="entry name" value="Winged helix' DNA-binding domain"/>
    <property type="match status" value="1"/>
</dbReference>
<dbReference type="PROSITE" id="PS50042">
    <property type="entry name" value="CNMP_BINDING_3"/>
    <property type="match status" value="1"/>
</dbReference>
<dbReference type="PROSITE" id="PS00042">
    <property type="entry name" value="HTH_CRP_1"/>
    <property type="match status" value="1"/>
</dbReference>
<dbReference type="PROSITE" id="PS51063">
    <property type="entry name" value="HTH_CRP_2"/>
    <property type="match status" value="1"/>
</dbReference>
<evidence type="ECO:0000250" key="1"/>
<evidence type="ECO:0000255" key="2"/>
<evidence type="ECO:0000255" key="3">
    <source>
        <dbReference type="PROSITE-ProRule" id="PRU00387"/>
    </source>
</evidence>
<evidence type="ECO:0000305" key="4"/>